<accession>A7I757</accession>
<name>SPSS1_METB6</name>
<organism>
    <name type="scientific">Methanoregula boonei (strain DSM 21154 / JCM 14090 / 6A8)</name>
    <dbReference type="NCBI Taxonomy" id="456442"/>
    <lineage>
        <taxon>Archaea</taxon>
        <taxon>Methanobacteriati</taxon>
        <taxon>Methanobacteriota</taxon>
        <taxon>Stenosarchaea group</taxon>
        <taxon>Methanomicrobia</taxon>
        <taxon>Methanomicrobiales</taxon>
        <taxon>Methanoregulaceae</taxon>
        <taxon>Methanoregula</taxon>
    </lineage>
</organism>
<keyword id="KW-0648">Protein biosynthesis</keyword>
<keyword id="KW-0663">Pyridoxal phosphate</keyword>
<keyword id="KW-1185">Reference proteome</keyword>
<keyword id="KW-0808">Transferase</keyword>
<proteinExistence type="inferred from homology"/>
<reference key="1">
    <citation type="journal article" date="2015" name="Microbiology">
        <title>Genome of Methanoregula boonei 6A8 reveals adaptations to oligotrophic peatland environments.</title>
        <authorList>
            <person name="Braeuer S."/>
            <person name="Cadillo-Quiroz H."/>
            <person name="Kyrpides N."/>
            <person name="Woyke T."/>
            <person name="Goodwin L."/>
            <person name="Detter C."/>
            <person name="Podell S."/>
            <person name="Yavitt J.B."/>
            <person name="Zinder S.H."/>
        </authorList>
    </citation>
    <scope>NUCLEOTIDE SEQUENCE [LARGE SCALE GENOMIC DNA]</scope>
    <source>
        <strain>DSM 21154 / JCM 14090 / 6A8</strain>
    </source>
</reference>
<dbReference type="EC" id="2.5.1.73" evidence="1"/>
<dbReference type="EMBL" id="CP000780">
    <property type="protein sequence ID" value="ABS55568.1"/>
    <property type="molecule type" value="Genomic_DNA"/>
</dbReference>
<dbReference type="RefSeq" id="WP_012106595.1">
    <property type="nucleotide sequence ID" value="NC_009712.1"/>
</dbReference>
<dbReference type="SMR" id="A7I757"/>
<dbReference type="STRING" id="456442.Mboo_1050"/>
<dbReference type="GeneID" id="5410184"/>
<dbReference type="KEGG" id="mbn:Mboo_1050"/>
<dbReference type="eggNOG" id="arCOG00091">
    <property type="taxonomic scope" value="Archaea"/>
</dbReference>
<dbReference type="HOGENOM" id="CLU_060476_0_0_2"/>
<dbReference type="OrthoDB" id="5817at2157"/>
<dbReference type="Proteomes" id="UP000002408">
    <property type="component" value="Chromosome"/>
</dbReference>
<dbReference type="GO" id="GO:0043766">
    <property type="term" value="F:Sep-tRNA:Cys-tRNA synthase activity"/>
    <property type="evidence" value="ECO:0007669"/>
    <property type="project" value="UniProtKB-UniRule"/>
</dbReference>
<dbReference type="GO" id="GO:0006412">
    <property type="term" value="P:translation"/>
    <property type="evidence" value="ECO:0007669"/>
    <property type="project" value="UniProtKB-KW"/>
</dbReference>
<dbReference type="Gene3D" id="3.90.1150.10">
    <property type="entry name" value="Aspartate Aminotransferase, domain 1"/>
    <property type="match status" value="1"/>
</dbReference>
<dbReference type="Gene3D" id="3.40.640.10">
    <property type="entry name" value="Type I PLP-dependent aspartate aminotransferase-like (Major domain)"/>
    <property type="match status" value="1"/>
</dbReference>
<dbReference type="HAMAP" id="MF_01675">
    <property type="entry name" value="Sep_Cys_tRNA_synth"/>
    <property type="match status" value="1"/>
</dbReference>
<dbReference type="InterPro" id="IPR000192">
    <property type="entry name" value="Aminotrans_V_dom"/>
</dbReference>
<dbReference type="InterPro" id="IPR015424">
    <property type="entry name" value="PyrdxlP-dep_Trfase"/>
</dbReference>
<dbReference type="InterPro" id="IPR015421">
    <property type="entry name" value="PyrdxlP-dep_Trfase_major"/>
</dbReference>
<dbReference type="InterPro" id="IPR015422">
    <property type="entry name" value="PyrdxlP-dep_Trfase_small"/>
</dbReference>
<dbReference type="InterPro" id="IPR013375">
    <property type="entry name" value="Sep_Cys-tRNA_synth_arc"/>
</dbReference>
<dbReference type="NCBIfam" id="NF006810">
    <property type="entry name" value="PRK09331.1"/>
    <property type="match status" value="1"/>
</dbReference>
<dbReference type="NCBIfam" id="TIGR02539">
    <property type="entry name" value="SepCysS"/>
    <property type="match status" value="1"/>
</dbReference>
<dbReference type="PANTHER" id="PTHR43586">
    <property type="entry name" value="CYSTEINE DESULFURASE"/>
    <property type="match status" value="1"/>
</dbReference>
<dbReference type="PANTHER" id="PTHR43586:SF3">
    <property type="entry name" value="O-PHOSPHO-L-SERYL-TRNA:CYS-TRNA SYNTHASE"/>
    <property type="match status" value="1"/>
</dbReference>
<dbReference type="Pfam" id="PF00266">
    <property type="entry name" value="Aminotran_5"/>
    <property type="match status" value="1"/>
</dbReference>
<dbReference type="SUPFAM" id="SSF53383">
    <property type="entry name" value="PLP-dependent transferases"/>
    <property type="match status" value="1"/>
</dbReference>
<gene>
    <name type="ordered locus">Mboo_1050</name>
</gene>
<evidence type="ECO:0000255" key="1">
    <source>
        <dbReference type="HAMAP-Rule" id="MF_01675"/>
    </source>
</evidence>
<feature type="chain" id="PRO_0000359457" description="O-phospho-L-seryl-tRNA:Cys-tRNA synthase 1">
    <location>
        <begin position="1"/>
        <end position="392"/>
    </location>
</feature>
<feature type="binding site" evidence="1">
    <location>
        <begin position="85"/>
        <end position="86"/>
    </location>
    <ligand>
        <name>pyridoxal 5'-phosphate</name>
        <dbReference type="ChEBI" id="CHEBI:597326"/>
    </ligand>
</feature>
<feature type="binding site" evidence="1">
    <location>
        <position position="190"/>
    </location>
    <ligand>
        <name>pyridoxal 5'-phosphate</name>
        <dbReference type="ChEBI" id="CHEBI:597326"/>
    </ligand>
</feature>
<feature type="binding site" evidence="1">
    <location>
        <begin position="213"/>
        <end position="215"/>
    </location>
    <ligand>
        <name>pyridoxal 5'-phosphate</name>
        <dbReference type="ChEBI" id="CHEBI:597326"/>
    </ligand>
</feature>
<feature type="modified residue" description="N6-(pyridoxal phosphate)lysine" evidence="1">
    <location>
        <position position="216"/>
    </location>
</feature>
<protein>
    <recommendedName>
        <fullName evidence="1">O-phospho-L-seryl-tRNA:Cys-tRNA synthase 1</fullName>
        <ecNumber evidence="1">2.5.1.73</ecNumber>
    </recommendedName>
    <alternativeName>
        <fullName evidence="1">Sep-tRNA:Cys-tRNA synthase 1</fullName>
        <shortName evidence="1">SepCysS 1</shortName>
    </alternativeName>
</protein>
<comment type="function">
    <text evidence="1">Converts O-phospho-L-seryl-tRNA(Cys) (Sep-tRNA(Cys)) to L-cysteinyl-tRNA(Cys) (Cys-tRNA(Cys)).</text>
</comment>
<comment type="catalytic activity">
    <reaction evidence="1">
        <text>O-phospho-L-seryl-tRNA(Cys) + hydrogen sulfide + H(+) = L-cysteinyl-tRNA(Cys) + phosphate</text>
        <dbReference type="Rhea" id="RHEA:25686"/>
        <dbReference type="Rhea" id="RHEA-COMP:9679"/>
        <dbReference type="Rhea" id="RHEA-COMP:9719"/>
        <dbReference type="ChEBI" id="CHEBI:15378"/>
        <dbReference type="ChEBI" id="CHEBI:29919"/>
        <dbReference type="ChEBI" id="CHEBI:43474"/>
        <dbReference type="ChEBI" id="CHEBI:78517"/>
        <dbReference type="ChEBI" id="CHEBI:78551"/>
        <dbReference type="EC" id="2.5.1.73"/>
    </reaction>
</comment>
<comment type="cofactor">
    <cofactor evidence="1">
        <name>pyridoxal 5'-phosphate</name>
        <dbReference type="ChEBI" id="CHEBI:597326"/>
    </cofactor>
</comment>
<comment type="subunit">
    <text evidence="1">Homodimer. Interacts with SepRS.</text>
</comment>
<comment type="similarity">
    <text evidence="1">Belongs to the SepCysS family.</text>
</comment>
<sequence length="392" mass="42413">MKCGNGIEARQVNELFINVDPIQAGGRLTGDAIKAIIAYGDGYSVCDNCRKPNRLDCIAKPPIAEFHKDVAAWLNMDAARMMPGARRGFQAVAHTYVSKGNPVLLTSLSHYTEFLAVEGAGGVACEIPADSNHLVTPDAAAAKIEEVKQKFGKAPVLAIIDHVDYQYGNLHDFAGIAKVAHQYDVPVLYNGAYTVGTMPVDGKVIGADFIVGSGHKSMASPAPSGVLATTAERAKEVFRTTGITGDVTGRKFGIKEPELMGCTLMGATLVGMMASFPHVKERVKHFDKELVNNRIVMEALLSIEGTKILSEYPRKHTLTRVDTTGSFDRVAETHKKKGFYFSSALNDKGIFGLIPGATRIWKFNTYGMTEKQTRYLADAFVAVAQENGLPVK</sequence>